<sequence>MGKSKFERNKPHVNIGTIGHVDHGKTSLTAAITKYFGEYKAYDQIDAAPEEKARGITISTAHVEYETPARHYAHVDCPGHADYVKNMITGAAQMDGAILVCSAADGPMPQTREHILLARQVGVPAIVVFLNKVDQVDDAELLELVELEVRELLSSYDFPGDDIPIIKGSALAALEDSDKKIGEDAIRELMAAVDAYIPTPERPINLPFLLPIEDVFSISGRGTVVTGRVERGIVKVGEEVEIVGIRPTTKTTVTGVEMFRKLLDQGQAGDNIGALIRGVTRDGVERGQILCKPGSVKPHKKFMAEAYILTKEEGGRHTPFFTNYRPQFYFRTTDVTGIVTLPEGTEMVMPGDNVTVSVELIVPIAMEEKLRFAIREGGRTVGAGIVASIVE</sequence>
<feature type="chain" id="PRO_0000337488" description="Elongation factor Tu">
    <location>
        <begin position="1"/>
        <end position="391"/>
    </location>
</feature>
<feature type="domain" description="tr-type G">
    <location>
        <begin position="10"/>
        <end position="201"/>
    </location>
</feature>
<feature type="region of interest" description="G1" evidence="1">
    <location>
        <begin position="19"/>
        <end position="26"/>
    </location>
</feature>
<feature type="region of interest" description="G2" evidence="1">
    <location>
        <begin position="55"/>
        <end position="59"/>
    </location>
</feature>
<feature type="region of interest" description="G3" evidence="1">
    <location>
        <begin position="76"/>
        <end position="79"/>
    </location>
</feature>
<feature type="region of interest" description="G4" evidence="1">
    <location>
        <begin position="131"/>
        <end position="134"/>
    </location>
</feature>
<feature type="region of interest" description="G5" evidence="1">
    <location>
        <begin position="169"/>
        <end position="171"/>
    </location>
</feature>
<feature type="binding site" evidence="2">
    <location>
        <begin position="19"/>
        <end position="26"/>
    </location>
    <ligand>
        <name>GTP</name>
        <dbReference type="ChEBI" id="CHEBI:37565"/>
    </ligand>
</feature>
<feature type="binding site" evidence="2">
    <location>
        <position position="26"/>
    </location>
    <ligand>
        <name>Mg(2+)</name>
        <dbReference type="ChEBI" id="CHEBI:18420"/>
    </ligand>
</feature>
<feature type="binding site" evidence="2">
    <location>
        <begin position="76"/>
        <end position="80"/>
    </location>
    <ligand>
        <name>GTP</name>
        <dbReference type="ChEBI" id="CHEBI:37565"/>
    </ligand>
</feature>
<feature type="binding site" evidence="2">
    <location>
        <begin position="131"/>
        <end position="134"/>
    </location>
    <ligand>
        <name>GTP</name>
        <dbReference type="ChEBI" id="CHEBI:37565"/>
    </ligand>
</feature>
<dbReference type="EC" id="3.6.5.3" evidence="2"/>
<dbReference type="EMBL" id="AM236080">
    <property type="protein sequence ID" value="CAK07252.1"/>
    <property type="molecule type" value="Genomic_DNA"/>
</dbReference>
<dbReference type="EMBL" id="AM236080">
    <property type="protein sequence ID" value="CAK07267.1"/>
    <property type="molecule type" value="Genomic_DNA"/>
</dbReference>
<dbReference type="SMR" id="Q1MIE3"/>
<dbReference type="EnsemblBacteria" id="CAK07252">
    <property type="protein sequence ID" value="CAK07252"/>
    <property type="gene ID" value="RL1757"/>
</dbReference>
<dbReference type="EnsemblBacteria" id="CAK07267">
    <property type="protein sequence ID" value="CAK07267"/>
    <property type="gene ID" value="RL1772"/>
</dbReference>
<dbReference type="KEGG" id="rle:RL1757"/>
<dbReference type="KEGG" id="rle:RL1772"/>
<dbReference type="eggNOG" id="COG0050">
    <property type="taxonomic scope" value="Bacteria"/>
</dbReference>
<dbReference type="HOGENOM" id="CLU_007265_0_1_5"/>
<dbReference type="Proteomes" id="UP000006575">
    <property type="component" value="Chromosome"/>
</dbReference>
<dbReference type="GO" id="GO:0005829">
    <property type="term" value="C:cytosol"/>
    <property type="evidence" value="ECO:0007669"/>
    <property type="project" value="TreeGrafter"/>
</dbReference>
<dbReference type="GO" id="GO:0005525">
    <property type="term" value="F:GTP binding"/>
    <property type="evidence" value="ECO:0007669"/>
    <property type="project" value="UniProtKB-UniRule"/>
</dbReference>
<dbReference type="GO" id="GO:0003924">
    <property type="term" value="F:GTPase activity"/>
    <property type="evidence" value="ECO:0007669"/>
    <property type="project" value="InterPro"/>
</dbReference>
<dbReference type="GO" id="GO:0097216">
    <property type="term" value="F:guanosine tetraphosphate binding"/>
    <property type="evidence" value="ECO:0007669"/>
    <property type="project" value="UniProtKB-ARBA"/>
</dbReference>
<dbReference type="GO" id="GO:0003746">
    <property type="term" value="F:translation elongation factor activity"/>
    <property type="evidence" value="ECO:0007669"/>
    <property type="project" value="UniProtKB-UniRule"/>
</dbReference>
<dbReference type="CDD" id="cd01884">
    <property type="entry name" value="EF_Tu"/>
    <property type="match status" value="1"/>
</dbReference>
<dbReference type="CDD" id="cd03697">
    <property type="entry name" value="EFTU_II"/>
    <property type="match status" value="1"/>
</dbReference>
<dbReference type="CDD" id="cd03707">
    <property type="entry name" value="EFTU_III"/>
    <property type="match status" value="1"/>
</dbReference>
<dbReference type="FunFam" id="2.40.30.10:FF:000001">
    <property type="entry name" value="Elongation factor Tu"/>
    <property type="match status" value="1"/>
</dbReference>
<dbReference type="FunFam" id="3.40.50.300:FF:000003">
    <property type="entry name" value="Elongation factor Tu"/>
    <property type="match status" value="1"/>
</dbReference>
<dbReference type="Gene3D" id="3.40.50.300">
    <property type="entry name" value="P-loop containing nucleotide triphosphate hydrolases"/>
    <property type="match status" value="1"/>
</dbReference>
<dbReference type="Gene3D" id="2.40.30.10">
    <property type="entry name" value="Translation factors"/>
    <property type="match status" value="2"/>
</dbReference>
<dbReference type="HAMAP" id="MF_00118_B">
    <property type="entry name" value="EF_Tu_B"/>
    <property type="match status" value="1"/>
</dbReference>
<dbReference type="InterPro" id="IPR041709">
    <property type="entry name" value="EF-Tu_GTP-bd"/>
</dbReference>
<dbReference type="InterPro" id="IPR050055">
    <property type="entry name" value="EF-Tu_GTPase"/>
</dbReference>
<dbReference type="InterPro" id="IPR004161">
    <property type="entry name" value="EFTu-like_2"/>
</dbReference>
<dbReference type="InterPro" id="IPR033720">
    <property type="entry name" value="EFTU_2"/>
</dbReference>
<dbReference type="InterPro" id="IPR031157">
    <property type="entry name" value="G_TR_CS"/>
</dbReference>
<dbReference type="InterPro" id="IPR027417">
    <property type="entry name" value="P-loop_NTPase"/>
</dbReference>
<dbReference type="InterPro" id="IPR005225">
    <property type="entry name" value="Small_GTP-bd"/>
</dbReference>
<dbReference type="InterPro" id="IPR000795">
    <property type="entry name" value="T_Tr_GTP-bd_dom"/>
</dbReference>
<dbReference type="InterPro" id="IPR009000">
    <property type="entry name" value="Transl_B-barrel_sf"/>
</dbReference>
<dbReference type="InterPro" id="IPR009001">
    <property type="entry name" value="Transl_elong_EF1A/Init_IF2_C"/>
</dbReference>
<dbReference type="InterPro" id="IPR004541">
    <property type="entry name" value="Transl_elong_EFTu/EF1A_bac/org"/>
</dbReference>
<dbReference type="InterPro" id="IPR004160">
    <property type="entry name" value="Transl_elong_EFTu/EF1A_C"/>
</dbReference>
<dbReference type="NCBIfam" id="TIGR00485">
    <property type="entry name" value="EF-Tu"/>
    <property type="match status" value="1"/>
</dbReference>
<dbReference type="NCBIfam" id="NF000766">
    <property type="entry name" value="PRK00049.1"/>
    <property type="match status" value="1"/>
</dbReference>
<dbReference type="NCBIfam" id="NF009372">
    <property type="entry name" value="PRK12735.1"/>
    <property type="match status" value="1"/>
</dbReference>
<dbReference type="NCBIfam" id="NF009373">
    <property type="entry name" value="PRK12736.1"/>
    <property type="match status" value="1"/>
</dbReference>
<dbReference type="NCBIfam" id="TIGR00231">
    <property type="entry name" value="small_GTP"/>
    <property type="match status" value="1"/>
</dbReference>
<dbReference type="PANTHER" id="PTHR43721:SF22">
    <property type="entry name" value="ELONGATION FACTOR TU, MITOCHONDRIAL"/>
    <property type="match status" value="1"/>
</dbReference>
<dbReference type="PANTHER" id="PTHR43721">
    <property type="entry name" value="ELONGATION FACTOR TU-RELATED"/>
    <property type="match status" value="1"/>
</dbReference>
<dbReference type="Pfam" id="PF00009">
    <property type="entry name" value="GTP_EFTU"/>
    <property type="match status" value="1"/>
</dbReference>
<dbReference type="Pfam" id="PF03144">
    <property type="entry name" value="GTP_EFTU_D2"/>
    <property type="match status" value="1"/>
</dbReference>
<dbReference type="Pfam" id="PF03143">
    <property type="entry name" value="GTP_EFTU_D3"/>
    <property type="match status" value="1"/>
</dbReference>
<dbReference type="PRINTS" id="PR00315">
    <property type="entry name" value="ELONGATNFCT"/>
</dbReference>
<dbReference type="SUPFAM" id="SSF50465">
    <property type="entry name" value="EF-Tu/eEF-1alpha/eIF2-gamma C-terminal domain"/>
    <property type="match status" value="1"/>
</dbReference>
<dbReference type="SUPFAM" id="SSF52540">
    <property type="entry name" value="P-loop containing nucleoside triphosphate hydrolases"/>
    <property type="match status" value="1"/>
</dbReference>
<dbReference type="SUPFAM" id="SSF50447">
    <property type="entry name" value="Translation proteins"/>
    <property type="match status" value="1"/>
</dbReference>
<dbReference type="PROSITE" id="PS00301">
    <property type="entry name" value="G_TR_1"/>
    <property type="match status" value="1"/>
</dbReference>
<dbReference type="PROSITE" id="PS51722">
    <property type="entry name" value="G_TR_2"/>
    <property type="match status" value="1"/>
</dbReference>
<name>EFTU_RHIJ3</name>
<keyword id="KW-0963">Cytoplasm</keyword>
<keyword id="KW-0251">Elongation factor</keyword>
<keyword id="KW-0342">GTP-binding</keyword>
<keyword id="KW-0378">Hydrolase</keyword>
<keyword id="KW-0460">Magnesium</keyword>
<keyword id="KW-0479">Metal-binding</keyword>
<keyword id="KW-0547">Nucleotide-binding</keyword>
<keyword id="KW-0648">Protein biosynthesis</keyword>
<evidence type="ECO:0000250" key="1"/>
<evidence type="ECO:0000255" key="2">
    <source>
        <dbReference type="HAMAP-Rule" id="MF_00118"/>
    </source>
</evidence>
<accession>Q1MIE3</accession>
<organism>
    <name type="scientific">Rhizobium johnstonii (strain DSM 114642 / LMG 32736 / 3841)</name>
    <name type="common">Rhizobium leguminosarum bv. viciae</name>
    <dbReference type="NCBI Taxonomy" id="216596"/>
    <lineage>
        <taxon>Bacteria</taxon>
        <taxon>Pseudomonadati</taxon>
        <taxon>Pseudomonadota</taxon>
        <taxon>Alphaproteobacteria</taxon>
        <taxon>Hyphomicrobiales</taxon>
        <taxon>Rhizobiaceae</taxon>
        <taxon>Rhizobium/Agrobacterium group</taxon>
        <taxon>Rhizobium</taxon>
        <taxon>Rhizobium johnstonii</taxon>
    </lineage>
</organism>
<proteinExistence type="inferred from homology"/>
<reference key="1">
    <citation type="journal article" date="2006" name="Genome Biol.">
        <title>The genome of Rhizobium leguminosarum has recognizable core and accessory components.</title>
        <authorList>
            <person name="Young J.P.W."/>
            <person name="Crossman L.C."/>
            <person name="Johnston A.W.B."/>
            <person name="Thomson N.R."/>
            <person name="Ghazoui Z.F."/>
            <person name="Hull K.H."/>
            <person name="Wexler M."/>
            <person name="Curson A.R.J."/>
            <person name="Todd J.D."/>
            <person name="Poole P.S."/>
            <person name="Mauchline T.H."/>
            <person name="East A.K."/>
            <person name="Quail M.A."/>
            <person name="Churcher C."/>
            <person name="Arrowsmith C."/>
            <person name="Cherevach I."/>
            <person name="Chillingworth T."/>
            <person name="Clarke K."/>
            <person name="Cronin A."/>
            <person name="Davis P."/>
            <person name="Fraser A."/>
            <person name="Hance Z."/>
            <person name="Hauser H."/>
            <person name="Jagels K."/>
            <person name="Moule S."/>
            <person name="Mungall K."/>
            <person name="Norbertczak H."/>
            <person name="Rabbinowitsch E."/>
            <person name="Sanders M."/>
            <person name="Simmonds M."/>
            <person name="Whitehead S."/>
            <person name="Parkhill J."/>
        </authorList>
    </citation>
    <scope>NUCLEOTIDE SEQUENCE [LARGE SCALE GENOMIC DNA]</scope>
    <source>
        <strain>DSM 114642 / LMG 32736 / 3841</strain>
    </source>
</reference>
<comment type="function">
    <text evidence="2">GTP hydrolase that promotes the GTP-dependent binding of aminoacyl-tRNA to the A-site of ribosomes during protein biosynthesis.</text>
</comment>
<comment type="catalytic activity">
    <reaction evidence="2">
        <text>GTP + H2O = GDP + phosphate + H(+)</text>
        <dbReference type="Rhea" id="RHEA:19669"/>
        <dbReference type="ChEBI" id="CHEBI:15377"/>
        <dbReference type="ChEBI" id="CHEBI:15378"/>
        <dbReference type="ChEBI" id="CHEBI:37565"/>
        <dbReference type="ChEBI" id="CHEBI:43474"/>
        <dbReference type="ChEBI" id="CHEBI:58189"/>
        <dbReference type="EC" id="3.6.5.3"/>
    </reaction>
    <physiologicalReaction direction="left-to-right" evidence="2">
        <dbReference type="Rhea" id="RHEA:19670"/>
    </physiologicalReaction>
</comment>
<comment type="subunit">
    <text evidence="2">Monomer.</text>
</comment>
<comment type="subcellular location">
    <subcellularLocation>
        <location evidence="2">Cytoplasm</location>
    </subcellularLocation>
</comment>
<comment type="similarity">
    <text evidence="2">Belongs to the TRAFAC class translation factor GTPase superfamily. Classic translation factor GTPase family. EF-Tu/EF-1A subfamily.</text>
</comment>
<protein>
    <recommendedName>
        <fullName evidence="2">Elongation factor Tu</fullName>
        <shortName evidence="2">EF-Tu</shortName>
        <ecNumber evidence="2">3.6.5.3</ecNumber>
    </recommendedName>
</protein>
<gene>
    <name evidence="2" type="primary">tuf1</name>
    <name type="synonym">tufB1</name>
    <name type="ordered locus">RL1757</name>
</gene>
<gene>
    <name evidence="2" type="primary">tuf2</name>
    <name type="synonym">tufB2</name>
    <name type="ordered locus">RL1772</name>
</gene>